<protein>
    <recommendedName>
        <fullName evidence="1">Sec-independent protein translocase protein TatB</fullName>
    </recommendedName>
</protein>
<accession>P57800</accession>
<dbReference type="EMBL" id="AE004439">
    <property type="protein sequence ID" value="AAK03774.1"/>
    <property type="molecule type" value="Genomic_DNA"/>
</dbReference>
<dbReference type="RefSeq" id="WP_010907290.1">
    <property type="nucleotide sequence ID" value="NC_002663.1"/>
</dbReference>
<dbReference type="SMR" id="P57800"/>
<dbReference type="STRING" id="272843.PM1690"/>
<dbReference type="EnsemblBacteria" id="AAK03774">
    <property type="protein sequence ID" value="AAK03774"/>
    <property type="gene ID" value="PM1690"/>
</dbReference>
<dbReference type="KEGG" id="pmu:PM1690"/>
<dbReference type="PATRIC" id="fig|272843.6.peg.1711"/>
<dbReference type="HOGENOM" id="CLU_086034_1_0_6"/>
<dbReference type="OrthoDB" id="9816005at2"/>
<dbReference type="Proteomes" id="UP000000809">
    <property type="component" value="Chromosome"/>
</dbReference>
<dbReference type="GO" id="GO:0033281">
    <property type="term" value="C:TAT protein transport complex"/>
    <property type="evidence" value="ECO:0007669"/>
    <property type="project" value="UniProtKB-UniRule"/>
</dbReference>
<dbReference type="GO" id="GO:0008320">
    <property type="term" value="F:protein transmembrane transporter activity"/>
    <property type="evidence" value="ECO:0007669"/>
    <property type="project" value="UniProtKB-UniRule"/>
</dbReference>
<dbReference type="GO" id="GO:0043953">
    <property type="term" value="P:protein transport by the Tat complex"/>
    <property type="evidence" value="ECO:0007669"/>
    <property type="project" value="UniProtKB-UniRule"/>
</dbReference>
<dbReference type="Gene3D" id="1.20.5.3310">
    <property type="match status" value="1"/>
</dbReference>
<dbReference type="HAMAP" id="MF_00237">
    <property type="entry name" value="TatB"/>
    <property type="match status" value="1"/>
</dbReference>
<dbReference type="InterPro" id="IPR018448">
    <property type="entry name" value="TatB"/>
</dbReference>
<dbReference type="NCBIfam" id="TIGR01410">
    <property type="entry name" value="tatB"/>
    <property type="match status" value="1"/>
</dbReference>
<dbReference type="PANTHER" id="PTHR33162">
    <property type="entry name" value="SEC-INDEPENDENT PROTEIN TRANSLOCASE PROTEIN TATA, CHLOROPLASTIC"/>
    <property type="match status" value="1"/>
</dbReference>
<dbReference type="PANTHER" id="PTHR33162:SF1">
    <property type="entry name" value="SEC-INDEPENDENT PROTEIN TRANSLOCASE PROTEIN TATA, CHLOROPLASTIC"/>
    <property type="match status" value="1"/>
</dbReference>
<dbReference type="PRINTS" id="PR01506">
    <property type="entry name" value="TATBPROTEIN"/>
</dbReference>
<dbReference type="SUPFAM" id="SSF47162">
    <property type="entry name" value="Apolipoprotein"/>
    <property type="match status" value="1"/>
</dbReference>
<proteinExistence type="inferred from homology"/>
<organism>
    <name type="scientific">Pasteurella multocida (strain Pm70)</name>
    <dbReference type="NCBI Taxonomy" id="272843"/>
    <lineage>
        <taxon>Bacteria</taxon>
        <taxon>Pseudomonadati</taxon>
        <taxon>Pseudomonadota</taxon>
        <taxon>Gammaproteobacteria</taxon>
        <taxon>Pasteurellales</taxon>
        <taxon>Pasteurellaceae</taxon>
        <taxon>Pasteurella</taxon>
    </lineage>
</organism>
<reference key="1">
    <citation type="journal article" date="2001" name="Proc. Natl. Acad. Sci. U.S.A.">
        <title>Complete genomic sequence of Pasteurella multocida Pm70.</title>
        <authorList>
            <person name="May B.J."/>
            <person name="Zhang Q."/>
            <person name="Li L.L."/>
            <person name="Paustian M.L."/>
            <person name="Whittam T.S."/>
            <person name="Kapur V."/>
        </authorList>
    </citation>
    <scope>NUCLEOTIDE SEQUENCE [LARGE SCALE GENOMIC DNA]</scope>
    <source>
        <strain>Pm70</strain>
    </source>
</reference>
<evidence type="ECO:0000255" key="1">
    <source>
        <dbReference type="HAMAP-Rule" id="MF_00237"/>
    </source>
</evidence>
<evidence type="ECO:0000256" key="2">
    <source>
        <dbReference type="SAM" id="MobiDB-lite"/>
    </source>
</evidence>
<sequence>MFDIGFSELFLILVIGLLVLGPKRLPVAIRTVMGWVATIRGLASNVQNELKQELKLQELQESIKKAEELNFQQLSPELSKTVEELKASAEKMRTALEQKAAATNTTLEEQIKEIKNATESTSQTLTEQLTPSEQVTEATTDDVLSPAEQAELAEENDEMVYIQQYYPDDDDEPVFASKVKPQTEEIQDKKA</sequence>
<keyword id="KW-0997">Cell inner membrane</keyword>
<keyword id="KW-1003">Cell membrane</keyword>
<keyword id="KW-0472">Membrane</keyword>
<keyword id="KW-0653">Protein transport</keyword>
<keyword id="KW-1185">Reference proteome</keyword>
<keyword id="KW-0811">Translocation</keyword>
<keyword id="KW-0812">Transmembrane</keyword>
<keyword id="KW-1133">Transmembrane helix</keyword>
<keyword id="KW-0813">Transport</keyword>
<feature type="chain" id="PRO_0000192664" description="Sec-independent protein translocase protein TatB">
    <location>
        <begin position="1"/>
        <end position="191"/>
    </location>
</feature>
<feature type="transmembrane region" description="Helical" evidence="1">
    <location>
        <begin position="1"/>
        <end position="21"/>
    </location>
</feature>
<feature type="region of interest" description="Disordered" evidence="2">
    <location>
        <begin position="119"/>
        <end position="139"/>
    </location>
</feature>
<feature type="region of interest" description="Disordered" evidence="2">
    <location>
        <begin position="168"/>
        <end position="191"/>
    </location>
</feature>
<feature type="compositionally biased region" description="Polar residues" evidence="2">
    <location>
        <begin position="119"/>
        <end position="138"/>
    </location>
</feature>
<feature type="compositionally biased region" description="Basic and acidic residues" evidence="2">
    <location>
        <begin position="181"/>
        <end position="191"/>
    </location>
</feature>
<comment type="function">
    <text evidence="1">Part of the twin-arginine translocation (Tat) system that transports large folded proteins containing a characteristic twin-arginine motif in their signal peptide across membranes. Together with TatC, TatB is part of a receptor directly interacting with Tat signal peptides. TatB may form an oligomeric binding site that transiently accommodates folded Tat precursor proteins before their translocation.</text>
</comment>
<comment type="subunit">
    <text evidence="1">The Tat system comprises two distinct complexes: a TatABC complex, containing multiple copies of TatA, TatB and TatC subunits, and a separate TatA complex, containing only TatA subunits. Substrates initially bind to the TatABC complex, which probably triggers association of the separate TatA complex to form the active translocon.</text>
</comment>
<comment type="subcellular location">
    <subcellularLocation>
        <location evidence="1">Cell inner membrane</location>
        <topology evidence="1">Single-pass membrane protein</topology>
    </subcellularLocation>
</comment>
<comment type="similarity">
    <text evidence="1">Belongs to the TatB family.</text>
</comment>
<gene>
    <name evidence="1" type="primary">tatB</name>
    <name type="ordered locus">PM1690</name>
</gene>
<name>TATB_PASMU</name>